<proteinExistence type="inferred from homology"/>
<protein>
    <recommendedName>
        <fullName evidence="2">Elongation factor Tu</fullName>
        <shortName evidence="2">EF-Tu</shortName>
        <ecNumber evidence="2">3.6.5.3</ecNumber>
    </recommendedName>
</protein>
<feature type="chain" id="PRO_0000337518" description="Elongation factor Tu">
    <location>
        <begin position="1"/>
        <end position="394"/>
    </location>
</feature>
<feature type="domain" description="tr-type G">
    <location>
        <begin position="10"/>
        <end position="204"/>
    </location>
</feature>
<feature type="region of interest" description="G1" evidence="1">
    <location>
        <begin position="19"/>
        <end position="26"/>
    </location>
</feature>
<feature type="region of interest" description="G2" evidence="1">
    <location>
        <begin position="60"/>
        <end position="64"/>
    </location>
</feature>
<feature type="region of interest" description="G3" evidence="1">
    <location>
        <begin position="81"/>
        <end position="84"/>
    </location>
</feature>
<feature type="region of interest" description="G4" evidence="1">
    <location>
        <begin position="136"/>
        <end position="139"/>
    </location>
</feature>
<feature type="region of interest" description="G5" evidence="1">
    <location>
        <begin position="174"/>
        <end position="176"/>
    </location>
</feature>
<feature type="binding site" evidence="2">
    <location>
        <begin position="19"/>
        <end position="26"/>
    </location>
    <ligand>
        <name>GTP</name>
        <dbReference type="ChEBI" id="CHEBI:37565"/>
    </ligand>
</feature>
<feature type="binding site" evidence="2">
    <location>
        <position position="26"/>
    </location>
    <ligand>
        <name>Mg(2+)</name>
        <dbReference type="ChEBI" id="CHEBI:18420"/>
    </ligand>
</feature>
<feature type="binding site" evidence="2">
    <location>
        <begin position="81"/>
        <end position="85"/>
    </location>
    <ligand>
        <name>GTP</name>
        <dbReference type="ChEBI" id="CHEBI:37565"/>
    </ligand>
</feature>
<feature type="binding site" evidence="2">
    <location>
        <begin position="136"/>
        <end position="139"/>
    </location>
    <ligand>
        <name>GTP</name>
        <dbReference type="ChEBI" id="CHEBI:37565"/>
    </ligand>
</feature>
<dbReference type="EC" id="3.6.5.3" evidence="2"/>
<dbReference type="EMBL" id="CP000507">
    <property type="protein sequence ID" value="ABL98410.1"/>
    <property type="molecule type" value="Genomic_DNA"/>
</dbReference>
<dbReference type="EMBL" id="CP000507">
    <property type="protein sequence ID" value="ABL98422.1"/>
    <property type="molecule type" value="Genomic_DNA"/>
</dbReference>
<dbReference type="SMR" id="A1S204"/>
<dbReference type="STRING" id="326297.Sama_0199"/>
<dbReference type="KEGG" id="saz:Sama_0199"/>
<dbReference type="KEGG" id="saz:Sama_0211"/>
<dbReference type="eggNOG" id="COG0050">
    <property type="taxonomic scope" value="Bacteria"/>
</dbReference>
<dbReference type="HOGENOM" id="CLU_007265_0_0_6"/>
<dbReference type="OrthoDB" id="9803139at2"/>
<dbReference type="Proteomes" id="UP000009175">
    <property type="component" value="Chromosome"/>
</dbReference>
<dbReference type="GO" id="GO:0005829">
    <property type="term" value="C:cytosol"/>
    <property type="evidence" value="ECO:0007669"/>
    <property type="project" value="TreeGrafter"/>
</dbReference>
<dbReference type="GO" id="GO:0005525">
    <property type="term" value="F:GTP binding"/>
    <property type="evidence" value="ECO:0007669"/>
    <property type="project" value="UniProtKB-UniRule"/>
</dbReference>
<dbReference type="GO" id="GO:0003924">
    <property type="term" value="F:GTPase activity"/>
    <property type="evidence" value="ECO:0007669"/>
    <property type="project" value="InterPro"/>
</dbReference>
<dbReference type="GO" id="GO:0097216">
    <property type="term" value="F:guanosine tetraphosphate binding"/>
    <property type="evidence" value="ECO:0007669"/>
    <property type="project" value="UniProtKB-ARBA"/>
</dbReference>
<dbReference type="GO" id="GO:0003746">
    <property type="term" value="F:translation elongation factor activity"/>
    <property type="evidence" value="ECO:0007669"/>
    <property type="project" value="UniProtKB-UniRule"/>
</dbReference>
<dbReference type="CDD" id="cd01884">
    <property type="entry name" value="EF_Tu"/>
    <property type="match status" value="1"/>
</dbReference>
<dbReference type="CDD" id="cd03697">
    <property type="entry name" value="EFTU_II"/>
    <property type="match status" value="1"/>
</dbReference>
<dbReference type="CDD" id="cd03707">
    <property type="entry name" value="EFTU_III"/>
    <property type="match status" value="1"/>
</dbReference>
<dbReference type="FunFam" id="2.40.30.10:FF:000001">
    <property type="entry name" value="Elongation factor Tu"/>
    <property type="match status" value="1"/>
</dbReference>
<dbReference type="FunFam" id="3.40.50.300:FF:000003">
    <property type="entry name" value="Elongation factor Tu"/>
    <property type="match status" value="1"/>
</dbReference>
<dbReference type="Gene3D" id="3.40.50.300">
    <property type="entry name" value="P-loop containing nucleotide triphosphate hydrolases"/>
    <property type="match status" value="1"/>
</dbReference>
<dbReference type="Gene3D" id="2.40.30.10">
    <property type="entry name" value="Translation factors"/>
    <property type="match status" value="2"/>
</dbReference>
<dbReference type="HAMAP" id="MF_00118_B">
    <property type="entry name" value="EF_Tu_B"/>
    <property type="match status" value="1"/>
</dbReference>
<dbReference type="InterPro" id="IPR041709">
    <property type="entry name" value="EF-Tu_GTP-bd"/>
</dbReference>
<dbReference type="InterPro" id="IPR050055">
    <property type="entry name" value="EF-Tu_GTPase"/>
</dbReference>
<dbReference type="InterPro" id="IPR004161">
    <property type="entry name" value="EFTu-like_2"/>
</dbReference>
<dbReference type="InterPro" id="IPR033720">
    <property type="entry name" value="EFTU_2"/>
</dbReference>
<dbReference type="InterPro" id="IPR031157">
    <property type="entry name" value="G_TR_CS"/>
</dbReference>
<dbReference type="InterPro" id="IPR027417">
    <property type="entry name" value="P-loop_NTPase"/>
</dbReference>
<dbReference type="InterPro" id="IPR005225">
    <property type="entry name" value="Small_GTP-bd"/>
</dbReference>
<dbReference type="InterPro" id="IPR000795">
    <property type="entry name" value="T_Tr_GTP-bd_dom"/>
</dbReference>
<dbReference type="InterPro" id="IPR009000">
    <property type="entry name" value="Transl_B-barrel_sf"/>
</dbReference>
<dbReference type="InterPro" id="IPR009001">
    <property type="entry name" value="Transl_elong_EF1A/Init_IF2_C"/>
</dbReference>
<dbReference type="InterPro" id="IPR004541">
    <property type="entry name" value="Transl_elong_EFTu/EF1A_bac/org"/>
</dbReference>
<dbReference type="InterPro" id="IPR004160">
    <property type="entry name" value="Transl_elong_EFTu/EF1A_C"/>
</dbReference>
<dbReference type="NCBIfam" id="TIGR00485">
    <property type="entry name" value="EF-Tu"/>
    <property type="match status" value="1"/>
</dbReference>
<dbReference type="NCBIfam" id="NF000766">
    <property type="entry name" value="PRK00049.1"/>
    <property type="match status" value="1"/>
</dbReference>
<dbReference type="NCBIfam" id="NF009372">
    <property type="entry name" value="PRK12735.1"/>
    <property type="match status" value="1"/>
</dbReference>
<dbReference type="NCBIfam" id="NF009373">
    <property type="entry name" value="PRK12736.1"/>
    <property type="match status" value="1"/>
</dbReference>
<dbReference type="NCBIfam" id="TIGR00231">
    <property type="entry name" value="small_GTP"/>
    <property type="match status" value="1"/>
</dbReference>
<dbReference type="PANTHER" id="PTHR43721:SF22">
    <property type="entry name" value="ELONGATION FACTOR TU, MITOCHONDRIAL"/>
    <property type="match status" value="1"/>
</dbReference>
<dbReference type="PANTHER" id="PTHR43721">
    <property type="entry name" value="ELONGATION FACTOR TU-RELATED"/>
    <property type="match status" value="1"/>
</dbReference>
<dbReference type="Pfam" id="PF00009">
    <property type="entry name" value="GTP_EFTU"/>
    <property type="match status" value="1"/>
</dbReference>
<dbReference type="Pfam" id="PF03144">
    <property type="entry name" value="GTP_EFTU_D2"/>
    <property type="match status" value="1"/>
</dbReference>
<dbReference type="Pfam" id="PF03143">
    <property type="entry name" value="GTP_EFTU_D3"/>
    <property type="match status" value="1"/>
</dbReference>
<dbReference type="PRINTS" id="PR00315">
    <property type="entry name" value="ELONGATNFCT"/>
</dbReference>
<dbReference type="SUPFAM" id="SSF50465">
    <property type="entry name" value="EF-Tu/eEF-1alpha/eIF2-gamma C-terminal domain"/>
    <property type="match status" value="1"/>
</dbReference>
<dbReference type="SUPFAM" id="SSF52540">
    <property type="entry name" value="P-loop containing nucleoside triphosphate hydrolases"/>
    <property type="match status" value="1"/>
</dbReference>
<dbReference type="SUPFAM" id="SSF50447">
    <property type="entry name" value="Translation proteins"/>
    <property type="match status" value="1"/>
</dbReference>
<dbReference type="PROSITE" id="PS00301">
    <property type="entry name" value="G_TR_1"/>
    <property type="match status" value="1"/>
</dbReference>
<dbReference type="PROSITE" id="PS51722">
    <property type="entry name" value="G_TR_2"/>
    <property type="match status" value="1"/>
</dbReference>
<organism>
    <name type="scientific">Shewanella amazonensis (strain ATCC BAA-1098 / SB2B)</name>
    <dbReference type="NCBI Taxonomy" id="326297"/>
    <lineage>
        <taxon>Bacteria</taxon>
        <taxon>Pseudomonadati</taxon>
        <taxon>Pseudomonadota</taxon>
        <taxon>Gammaproteobacteria</taxon>
        <taxon>Alteromonadales</taxon>
        <taxon>Shewanellaceae</taxon>
        <taxon>Shewanella</taxon>
    </lineage>
</organism>
<reference key="1">
    <citation type="submission" date="2006-12" db="EMBL/GenBank/DDBJ databases">
        <title>Complete sequence of Shewanella amazonensis SB2B.</title>
        <authorList>
            <consortium name="US DOE Joint Genome Institute"/>
            <person name="Copeland A."/>
            <person name="Lucas S."/>
            <person name="Lapidus A."/>
            <person name="Barry K."/>
            <person name="Detter J.C."/>
            <person name="Glavina del Rio T."/>
            <person name="Hammon N."/>
            <person name="Israni S."/>
            <person name="Dalin E."/>
            <person name="Tice H."/>
            <person name="Pitluck S."/>
            <person name="Munk A.C."/>
            <person name="Brettin T."/>
            <person name="Bruce D."/>
            <person name="Han C."/>
            <person name="Tapia R."/>
            <person name="Gilna P."/>
            <person name="Schmutz J."/>
            <person name="Larimer F."/>
            <person name="Land M."/>
            <person name="Hauser L."/>
            <person name="Kyrpides N."/>
            <person name="Mikhailova N."/>
            <person name="Fredrickson J."/>
            <person name="Richardson P."/>
        </authorList>
    </citation>
    <scope>NUCLEOTIDE SEQUENCE [LARGE SCALE GENOMIC DNA]</scope>
    <source>
        <strain>ATCC BAA-1098 / SB2B</strain>
    </source>
</reference>
<comment type="function">
    <text evidence="2">GTP hydrolase that promotes the GTP-dependent binding of aminoacyl-tRNA to the A-site of ribosomes during protein biosynthesis.</text>
</comment>
<comment type="catalytic activity">
    <reaction evidence="2">
        <text>GTP + H2O = GDP + phosphate + H(+)</text>
        <dbReference type="Rhea" id="RHEA:19669"/>
        <dbReference type="ChEBI" id="CHEBI:15377"/>
        <dbReference type="ChEBI" id="CHEBI:15378"/>
        <dbReference type="ChEBI" id="CHEBI:37565"/>
        <dbReference type="ChEBI" id="CHEBI:43474"/>
        <dbReference type="ChEBI" id="CHEBI:58189"/>
        <dbReference type="EC" id="3.6.5.3"/>
    </reaction>
    <physiologicalReaction direction="left-to-right" evidence="2">
        <dbReference type="Rhea" id="RHEA:19670"/>
    </physiologicalReaction>
</comment>
<comment type="subunit">
    <text evidence="2">Monomer.</text>
</comment>
<comment type="subcellular location">
    <subcellularLocation>
        <location evidence="2">Cytoplasm</location>
    </subcellularLocation>
</comment>
<comment type="similarity">
    <text evidence="2">Belongs to the TRAFAC class translation factor GTPase superfamily. Classic translation factor GTPase family. EF-Tu/EF-1A subfamily.</text>
</comment>
<gene>
    <name evidence="2" type="primary">tuf1</name>
    <name type="ordered locus">Sama_0199</name>
</gene>
<gene>
    <name evidence="2" type="primary">tuf2</name>
    <name type="ordered locus">Sama_0211</name>
</gene>
<evidence type="ECO:0000250" key="1"/>
<evidence type="ECO:0000255" key="2">
    <source>
        <dbReference type="HAMAP-Rule" id="MF_00118"/>
    </source>
</evidence>
<accession>A1S204</accession>
<keyword id="KW-0963">Cytoplasm</keyword>
<keyword id="KW-0251">Elongation factor</keyword>
<keyword id="KW-0342">GTP-binding</keyword>
<keyword id="KW-0378">Hydrolase</keyword>
<keyword id="KW-0460">Magnesium</keyword>
<keyword id="KW-0479">Metal-binding</keyword>
<keyword id="KW-0547">Nucleotide-binding</keyword>
<keyword id="KW-0648">Protein biosynthesis</keyword>
<keyword id="KW-1185">Reference proteome</keyword>
<sequence>MAKAKFERTKPHVNVGTIGHVDHGKTTLTAAISHVLAKTYGGEAKDFSQIDNAPEERERGITINTSHIEYDTPTRHYAHVDCPGHADYVKNMITGAAQMDGAILVVAATDGPMPQTREHILLSRQVGVPFIIVFMNKCDMVDDEELLELVEMEVRELLSEYDFPGDDLPVIQGSALKALEGDAAWEGKIIELAEALDSYIPEPERAIDKAFLMPIEDVFSISGRGTVVTGRVERGIIKVGEEVEIVGIKDTTKTTCTGVEMFRKLLDEGRAGENCGILLRGTKRDEVERGQVLSKPGTIKPHTKFESEVYVLSKEEGGRHTPFFKGYRPQFYFRTTDVTGTIELPEGVEMVMPGDNIKMVVTLICPIAMDEGLRFAIREGGRTVGAGVVAKIHE</sequence>
<name>EFTU_SHEAM</name>